<name>Y3650_BURMS</name>
<sequence length="108" mass="11785">MMKGQLAGLMKQAQQMQENMKKMQEQLALIEVEGQSGAGLVKVTMTCRNEVRRVAIDPSLLADDKDMLEDLVAAAFNDAVRKAEATSQEKMSGMTSGLPLPPGFKLPF</sequence>
<feature type="chain" id="PRO_1000003705" description="Nucleoid-associated protein BMASAVP1_A1850">
    <location>
        <begin position="1"/>
        <end position="108"/>
    </location>
</feature>
<feature type="region of interest" description="Disordered" evidence="2">
    <location>
        <begin position="84"/>
        <end position="108"/>
    </location>
</feature>
<feature type="compositionally biased region" description="Polar residues" evidence="2">
    <location>
        <begin position="85"/>
        <end position="95"/>
    </location>
</feature>
<feature type="compositionally biased region" description="Pro residues" evidence="2">
    <location>
        <begin position="99"/>
        <end position="108"/>
    </location>
</feature>
<evidence type="ECO:0000255" key="1">
    <source>
        <dbReference type="HAMAP-Rule" id="MF_00274"/>
    </source>
</evidence>
<evidence type="ECO:0000256" key="2">
    <source>
        <dbReference type="SAM" id="MobiDB-lite"/>
    </source>
</evidence>
<organism>
    <name type="scientific">Burkholderia mallei (strain SAVP1)</name>
    <dbReference type="NCBI Taxonomy" id="320388"/>
    <lineage>
        <taxon>Bacteria</taxon>
        <taxon>Pseudomonadati</taxon>
        <taxon>Pseudomonadota</taxon>
        <taxon>Betaproteobacteria</taxon>
        <taxon>Burkholderiales</taxon>
        <taxon>Burkholderiaceae</taxon>
        <taxon>Burkholderia</taxon>
        <taxon>pseudomallei group</taxon>
    </lineage>
</organism>
<protein>
    <recommendedName>
        <fullName evidence="1">Nucleoid-associated protein BMASAVP1_A1850</fullName>
    </recommendedName>
</protein>
<accession>A1V4L6</accession>
<reference key="1">
    <citation type="journal article" date="2010" name="Genome Biol. Evol.">
        <title>Continuing evolution of Burkholderia mallei through genome reduction and large-scale rearrangements.</title>
        <authorList>
            <person name="Losada L."/>
            <person name="Ronning C.M."/>
            <person name="DeShazer D."/>
            <person name="Woods D."/>
            <person name="Fedorova N."/>
            <person name="Kim H.S."/>
            <person name="Shabalina S.A."/>
            <person name="Pearson T.R."/>
            <person name="Brinkac L."/>
            <person name="Tan P."/>
            <person name="Nandi T."/>
            <person name="Crabtree J."/>
            <person name="Badger J."/>
            <person name="Beckstrom-Sternberg S."/>
            <person name="Saqib M."/>
            <person name="Schutzer S.E."/>
            <person name="Keim P."/>
            <person name="Nierman W.C."/>
        </authorList>
    </citation>
    <scope>NUCLEOTIDE SEQUENCE [LARGE SCALE GENOMIC DNA]</scope>
    <source>
        <strain>SAVP1</strain>
    </source>
</reference>
<comment type="function">
    <text evidence="1">Binds to DNA and alters its conformation. May be involved in regulation of gene expression, nucleoid organization and DNA protection.</text>
</comment>
<comment type="subunit">
    <text evidence="1">Homodimer.</text>
</comment>
<comment type="subcellular location">
    <subcellularLocation>
        <location evidence="1">Cytoplasm</location>
        <location evidence="1">Nucleoid</location>
    </subcellularLocation>
</comment>
<comment type="similarity">
    <text evidence="1">Belongs to the YbaB/EbfC family.</text>
</comment>
<gene>
    <name type="ordered locus">BMASAVP1_A1850</name>
</gene>
<keyword id="KW-0963">Cytoplasm</keyword>
<keyword id="KW-0238">DNA-binding</keyword>
<dbReference type="EMBL" id="CP000526">
    <property type="protein sequence ID" value="ABM50105.1"/>
    <property type="molecule type" value="Genomic_DNA"/>
</dbReference>
<dbReference type="RefSeq" id="WP_004192342.1">
    <property type="nucleotide sequence ID" value="NC_008785.1"/>
</dbReference>
<dbReference type="SMR" id="A1V4L6"/>
<dbReference type="KEGG" id="bmv:BMASAVP1_A1850"/>
<dbReference type="HOGENOM" id="CLU_140930_0_0_4"/>
<dbReference type="GO" id="GO:0043590">
    <property type="term" value="C:bacterial nucleoid"/>
    <property type="evidence" value="ECO:0007669"/>
    <property type="project" value="UniProtKB-UniRule"/>
</dbReference>
<dbReference type="GO" id="GO:0005829">
    <property type="term" value="C:cytosol"/>
    <property type="evidence" value="ECO:0007669"/>
    <property type="project" value="TreeGrafter"/>
</dbReference>
<dbReference type="GO" id="GO:0003677">
    <property type="term" value="F:DNA binding"/>
    <property type="evidence" value="ECO:0007669"/>
    <property type="project" value="UniProtKB-UniRule"/>
</dbReference>
<dbReference type="FunFam" id="3.30.1310.10:FF:000001">
    <property type="entry name" value="Nucleoid-associated protein YbaB"/>
    <property type="match status" value="1"/>
</dbReference>
<dbReference type="Gene3D" id="3.30.1310.10">
    <property type="entry name" value="Nucleoid-associated protein YbaB-like domain"/>
    <property type="match status" value="1"/>
</dbReference>
<dbReference type="HAMAP" id="MF_00274">
    <property type="entry name" value="DNA_YbaB_EbfC"/>
    <property type="match status" value="1"/>
</dbReference>
<dbReference type="InterPro" id="IPR036894">
    <property type="entry name" value="YbaB-like_sf"/>
</dbReference>
<dbReference type="InterPro" id="IPR004401">
    <property type="entry name" value="YbaB/EbfC"/>
</dbReference>
<dbReference type="NCBIfam" id="TIGR00103">
    <property type="entry name" value="DNA_YbaB_EbfC"/>
    <property type="match status" value="1"/>
</dbReference>
<dbReference type="PANTHER" id="PTHR33449">
    <property type="entry name" value="NUCLEOID-ASSOCIATED PROTEIN YBAB"/>
    <property type="match status" value="1"/>
</dbReference>
<dbReference type="PANTHER" id="PTHR33449:SF1">
    <property type="entry name" value="NUCLEOID-ASSOCIATED PROTEIN YBAB"/>
    <property type="match status" value="1"/>
</dbReference>
<dbReference type="Pfam" id="PF02575">
    <property type="entry name" value="YbaB_DNA_bd"/>
    <property type="match status" value="1"/>
</dbReference>
<dbReference type="PIRSF" id="PIRSF004555">
    <property type="entry name" value="UCP004555"/>
    <property type="match status" value="1"/>
</dbReference>
<dbReference type="SUPFAM" id="SSF82607">
    <property type="entry name" value="YbaB-like"/>
    <property type="match status" value="1"/>
</dbReference>
<proteinExistence type="inferred from homology"/>